<accession>Q48SP7</accession>
<name>RECR_STRPM</name>
<proteinExistence type="inferred from homology"/>
<gene>
    <name evidence="1" type="primary">recR</name>
    <name type="ordered locus">M28_Spy1153</name>
</gene>
<protein>
    <recommendedName>
        <fullName evidence="1">Recombination protein RecR</fullName>
    </recommendedName>
</protein>
<organism>
    <name type="scientific">Streptococcus pyogenes serotype M28 (strain MGAS6180)</name>
    <dbReference type="NCBI Taxonomy" id="319701"/>
    <lineage>
        <taxon>Bacteria</taxon>
        <taxon>Bacillati</taxon>
        <taxon>Bacillota</taxon>
        <taxon>Bacilli</taxon>
        <taxon>Lactobacillales</taxon>
        <taxon>Streptococcaceae</taxon>
        <taxon>Streptococcus</taxon>
    </lineage>
</organism>
<comment type="function">
    <text evidence="1">May play a role in DNA repair. It seems to be involved in an RecBC-independent recombinational process of DNA repair. It may act with RecF and RecO.</text>
</comment>
<comment type="similarity">
    <text evidence="1">Belongs to the RecR family.</text>
</comment>
<sequence length="198" mass="21645">MLYPTPIAKLIDSYSKLPGIGIKTATRLAFYTIGMSNEDVNDFAKNLLAAKRELTYCSICGNLTDDDPCHICTDTSRDQTTILVVEDAKDVSAMEKIQEYHGYYHVLHGLISPMNGVGPDDINLKSLITRLMDGKVSEVIVATNATADGEATSMYISRVLKPAGIKVTRLARGLAVGSDIEYADEVTLLRAIENRTEL</sequence>
<feature type="chain" id="PRO_1000001630" description="Recombination protein RecR">
    <location>
        <begin position="1"/>
        <end position="198"/>
    </location>
</feature>
<feature type="domain" description="Toprim" evidence="1">
    <location>
        <begin position="80"/>
        <end position="175"/>
    </location>
</feature>
<feature type="zinc finger region" description="C4-type" evidence="1">
    <location>
        <begin position="57"/>
        <end position="72"/>
    </location>
</feature>
<dbReference type="EMBL" id="CP000056">
    <property type="protein sequence ID" value="AAX72263.1"/>
    <property type="molecule type" value="Genomic_DNA"/>
</dbReference>
<dbReference type="RefSeq" id="WP_002983939.1">
    <property type="nucleotide sequence ID" value="NC_007296.2"/>
</dbReference>
<dbReference type="SMR" id="Q48SP7"/>
<dbReference type="GeneID" id="69900624"/>
<dbReference type="KEGG" id="spb:M28_Spy1153"/>
<dbReference type="HOGENOM" id="CLU_060739_1_0_9"/>
<dbReference type="GO" id="GO:0003677">
    <property type="term" value="F:DNA binding"/>
    <property type="evidence" value="ECO:0007669"/>
    <property type="project" value="UniProtKB-UniRule"/>
</dbReference>
<dbReference type="GO" id="GO:0008270">
    <property type="term" value="F:zinc ion binding"/>
    <property type="evidence" value="ECO:0007669"/>
    <property type="project" value="UniProtKB-KW"/>
</dbReference>
<dbReference type="GO" id="GO:0006310">
    <property type="term" value="P:DNA recombination"/>
    <property type="evidence" value="ECO:0007669"/>
    <property type="project" value="UniProtKB-UniRule"/>
</dbReference>
<dbReference type="GO" id="GO:0006281">
    <property type="term" value="P:DNA repair"/>
    <property type="evidence" value="ECO:0007669"/>
    <property type="project" value="UniProtKB-UniRule"/>
</dbReference>
<dbReference type="CDD" id="cd01025">
    <property type="entry name" value="TOPRIM_recR"/>
    <property type="match status" value="1"/>
</dbReference>
<dbReference type="Gene3D" id="3.30.60.80">
    <property type="match status" value="1"/>
</dbReference>
<dbReference type="Gene3D" id="3.40.1360.10">
    <property type="match status" value="1"/>
</dbReference>
<dbReference type="Gene3D" id="6.10.250.240">
    <property type="match status" value="1"/>
</dbReference>
<dbReference type="Gene3D" id="1.10.8.420">
    <property type="entry name" value="RecR Domain 1"/>
    <property type="match status" value="1"/>
</dbReference>
<dbReference type="HAMAP" id="MF_00017">
    <property type="entry name" value="RecR"/>
    <property type="match status" value="1"/>
</dbReference>
<dbReference type="InterPro" id="IPR000093">
    <property type="entry name" value="DNA_Rcmb_RecR"/>
</dbReference>
<dbReference type="InterPro" id="IPR023627">
    <property type="entry name" value="Rcmb_RecR"/>
</dbReference>
<dbReference type="InterPro" id="IPR015967">
    <property type="entry name" value="Rcmb_RecR_Znf"/>
</dbReference>
<dbReference type="InterPro" id="IPR006171">
    <property type="entry name" value="TOPRIM_dom"/>
</dbReference>
<dbReference type="InterPro" id="IPR034137">
    <property type="entry name" value="TOPRIM_RecR"/>
</dbReference>
<dbReference type="NCBIfam" id="TIGR00615">
    <property type="entry name" value="recR"/>
    <property type="match status" value="1"/>
</dbReference>
<dbReference type="PANTHER" id="PTHR30446">
    <property type="entry name" value="RECOMBINATION PROTEIN RECR"/>
    <property type="match status" value="1"/>
</dbReference>
<dbReference type="PANTHER" id="PTHR30446:SF0">
    <property type="entry name" value="RECOMBINATION PROTEIN RECR"/>
    <property type="match status" value="1"/>
</dbReference>
<dbReference type="Pfam" id="PF21175">
    <property type="entry name" value="RecR_C"/>
    <property type="match status" value="1"/>
</dbReference>
<dbReference type="Pfam" id="PF21176">
    <property type="entry name" value="RecR_HhH"/>
    <property type="match status" value="1"/>
</dbReference>
<dbReference type="Pfam" id="PF02132">
    <property type="entry name" value="RecR_ZnF"/>
    <property type="match status" value="1"/>
</dbReference>
<dbReference type="Pfam" id="PF13662">
    <property type="entry name" value="Toprim_4"/>
    <property type="match status" value="1"/>
</dbReference>
<dbReference type="SMART" id="SM00493">
    <property type="entry name" value="TOPRIM"/>
    <property type="match status" value="1"/>
</dbReference>
<dbReference type="SUPFAM" id="SSF111304">
    <property type="entry name" value="Recombination protein RecR"/>
    <property type="match status" value="1"/>
</dbReference>
<dbReference type="PROSITE" id="PS01300">
    <property type="entry name" value="RECR"/>
    <property type="match status" value="1"/>
</dbReference>
<dbReference type="PROSITE" id="PS50880">
    <property type="entry name" value="TOPRIM"/>
    <property type="match status" value="1"/>
</dbReference>
<keyword id="KW-0227">DNA damage</keyword>
<keyword id="KW-0233">DNA recombination</keyword>
<keyword id="KW-0234">DNA repair</keyword>
<keyword id="KW-0479">Metal-binding</keyword>
<keyword id="KW-0862">Zinc</keyword>
<keyword id="KW-0863">Zinc-finger</keyword>
<reference key="1">
    <citation type="journal article" date="2005" name="J. Infect. Dis.">
        <title>Genome sequence of a serotype M28 strain of group A Streptococcus: potential new insights into puerperal sepsis and bacterial disease specificity.</title>
        <authorList>
            <person name="Green N.M."/>
            <person name="Zhang S."/>
            <person name="Porcella S.F."/>
            <person name="Nagiec M.J."/>
            <person name="Barbian K.D."/>
            <person name="Beres S.B."/>
            <person name="Lefebvre R.B."/>
            <person name="Musser J.M."/>
        </authorList>
    </citation>
    <scope>NUCLEOTIDE SEQUENCE [LARGE SCALE GENOMIC DNA]</scope>
    <source>
        <strain>MGAS6180</strain>
    </source>
</reference>
<evidence type="ECO:0000255" key="1">
    <source>
        <dbReference type="HAMAP-Rule" id="MF_00017"/>
    </source>
</evidence>